<sequence>MRRNRRGSPARPAARFVRPAIPSALSVALLVCTPGLATADPQTDTIAALIADVAKANQRLQDLSDEVQAEQESVNKAMVDVETARDNAAAAEDDLEVSQRAVKDANAAIAAAQHRFDTFAAATYMNGPSVSYLSASSPDEIIATVTAAKTLSASSQAVMANLQRARTERVNTESAARLAKQKADKAAADAKASQDAAVAALTETRRKFDEQREEVQRLAAERDAAQARLQAARLVAWSSEGGQGAPPFRMWDPGSGPAGGRAWDGLWDPTLPMIPSANIPGDPIAVVNQVLGISATSAQVTANMGRKFLEQLGILQPTDTGITNAPAGSAQGRIPRVYGRQASEYVIRRGMSQIGVPYSWGGGNAAGPSKGIDSGAGTVGFDCSGLVLYSFAGVGIKLPHYSGSQYNLGRKIPSSQMRRGDVIFYGPNGSQHVTIYLGNGQMLEAPDVGLKVRVAPVRTAGMTPYVVRYIEY</sequence>
<accession>O53168</accession>
<accession>L0T6Z1</accession>
<proteinExistence type="evidence at protein level"/>
<dbReference type="EC" id="3.4.-.-"/>
<dbReference type="EMBL" id="AL123456">
    <property type="protein sequence ID" value="CCP44237.1"/>
    <property type="molecule type" value="Genomic_DNA"/>
</dbReference>
<dbReference type="PIR" id="H70873">
    <property type="entry name" value="H70873"/>
</dbReference>
<dbReference type="RefSeq" id="NP_215993.1">
    <property type="nucleotide sequence ID" value="NC_000962.3"/>
</dbReference>
<dbReference type="RefSeq" id="WP_003407523.1">
    <property type="nucleotide sequence ID" value="NZ_NVQJ01000004.1"/>
</dbReference>
<dbReference type="PDB" id="2XIV">
    <property type="method" value="X-ray"/>
    <property type="resolution" value="1.40 A"/>
    <property type="chains" value="A=264-472"/>
</dbReference>
<dbReference type="PDB" id="3NE0">
    <property type="method" value="X-ray"/>
    <property type="resolution" value="1.00 A"/>
    <property type="chains" value="A=263-472"/>
</dbReference>
<dbReference type="PDB" id="3PBC">
    <property type="method" value="X-ray"/>
    <property type="resolution" value="1.38 A"/>
    <property type="chains" value="A=260-472"/>
</dbReference>
<dbReference type="PDB" id="3S0Q">
    <property type="method" value="X-ray"/>
    <property type="resolution" value="1.45 A"/>
    <property type="chains" value="A=260-472"/>
</dbReference>
<dbReference type="PDB" id="4Q4G">
    <property type="method" value="X-ray"/>
    <property type="resolution" value="0.97 A"/>
    <property type="chains" value="X=1-472"/>
</dbReference>
<dbReference type="PDB" id="4Q4N">
    <property type="method" value="X-ray"/>
    <property type="resolution" value="1.38 A"/>
    <property type="chains" value="A=1-472"/>
</dbReference>
<dbReference type="PDB" id="4Q4T">
    <property type="method" value="X-ray"/>
    <property type="resolution" value="1.63 A"/>
    <property type="chains" value="A=1-472"/>
</dbReference>
<dbReference type="PDB" id="6EWY">
    <property type="method" value="X-ray"/>
    <property type="resolution" value="2.20 A"/>
    <property type="chains" value="A=39-255"/>
</dbReference>
<dbReference type="PDBsum" id="2XIV"/>
<dbReference type="PDBsum" id="3NE0"/>
<dbReference type="PDBsum" id="3PBC"/>
<dbReference type="PDBsum" id="3S0Q"/>
<dbReference type="PDBsum" id="4Q4G"/>
<dbReference type="PDBsum" id="4Q4N"/>
<dbReference type="PDBsum" id="4Q4T"/>
<dbReference type="PDBsum" id="6EWY"/>
<dbReference type="SMR" id="O53168"/>
<dbReference type="STRING" id="83332.Rv1477"/>
<dbReference type="PaxDb" id="83332-Rv1477"/>
<dbReference type="DNASU" id="886541"/>
<dbReference type="GeneID" id="886541"/>
<dbReference type="KEGG" id="mtu:Rv1477"/>
<dbReference type="KEGG" id="mtv:RVBD_1477"/>
<dbReference type="TubercuList" id="Rv1477"/>
<dbReference type="eggNOG" id="COG0791">
    <property type="taxonomic scope" value="Bacteria"/>
</dbReference>
<dbReference type="eggNOG" id="COG3883">
    <property type="taxonomic scope" value="Bacteria"/>
</dbReference>
<dbReference type="InParanoid" id="O53168"/>
<dbReference type="OrthoDB" id="4771638at2"/>
<dbReference type="EvolutionaryTrace" id="O53168"/>
<dbReference type="PHI-base" id="PHI:10541"/>
<dbReference type="Proteomes" id="UP000001584">
    <property type="component" value="Chromosome"/>
</dbReference>
<dbReference type="GO" id="GO:0005576">
    <property type="term" value="C:extracellular region"/>
    <property type="evidence" value="ECO:0007005"/>
    <property type="project" value="MTBBASE"/>
</dbReference>
<dbReference type="GO" id="GO:0009274">
    <property type="term" value="C:peptidoglycan-based cell wall"/>
    <property type="evidence" value="ECO:0000314"/>
    <property type="project" value="MTBBASE"/>
</dbReference>
<dbReference type="GO" id="GO:0008234">
    <property type="term" value="F:cysteine-type peptidase activity"/>
    <property type="evidence" value="ECO:0007669"/>
    <property type="project" value="UniProtKB-KW"/>
</dbReference>
<dbReference type="GO" id="GO:0008745">
    <property type="term" value="F:N-acetylmuramoyl-L-alanine amidase activity"/>
    <property type="evidence" value="ECO:0000314"/>
    <property type="project" value="MTBBASE"/>
</dbReference>
<dbReference type="GO" id="GO:0071555">
    <property type="term" value="P:cell wall organization"/>
    <property type="evidence" value="ECO:0007669"/>
    <property type="project" value="UniProtKB-KW"/>
</dbReference>
<dbReference type="GO" id="GO:0071554">
    <property type="term" value="P:cell wall organization or biogenesis"/>
    <property type="evidence" value="ECO:0000315"/>
    <property type="project" value="UniProtKB"/>
</dbReference>
<dbReference type="GO" id="GO:0006508">
    <property type="term" value="P:proteolysis"/>
    <property type="evidence" value="ECO:0007669"/>
    <property type="project" value="UniProtKB-KW"/>
</dbReference>
<dbReference type="DisProt" id="DP02505"/>
<dbReference type="FunFam" id="3.90.1720.10:FF:000010">
    <property type="entry name" value="Peptidoglycan endopeptidase RipA"/>
    <property type="match status" value="1"/>
</dbReference>
<dbReference type="Gene3D" id="6.10.250.3150">
    <property type="match status" value="1"/>
</dbReference>
<dbReference type="Gene3D" id="3.90.1720.10">
    <property type="entry name" value="endopeptidase domain like (from Nostoc punctiforme)"/>
    <property type="match status" value="1"/>
</dbReference>
<dbReference type="InterPro" id="IPR000064">
    <property type="entry name" value="NLP_P60_dom"/>
</dbReference>
<dbReference type="InterPro" id="IPR038765">
    <property type="entry name" value="Papain-like_cys_pep_sf"/>
</dbReference>
<dbReference type="InterPro" id="IPR051794">
    <property type="entry name" value="PG_Endopeptidase_C40"/>
</dbReference>
<dbReference type="InterPro" id="IPR049836">
    <property type="entry name" value="RipA"/>
</dbReference>
<dbReference type="NCBIfam" id="NF033741">
    <property type="entry name" value="NlpC_p60_RipA"/>
    <property type="match status" value="1"/>
</dbReference>
<dbReference type="PANTHER" id="PTHR47359:SF3">
    <property type="entry name" value="NLP_P60 DOMAIN-CONTAINING PROTEIN-RELATED"/>
    <property type="match status" value="1"/>
</dbReference>
<dbReference type="PANTHER" id="PTHR47359">
    <property type="entry name" value="PEPTIDOGLYCAN DL-ENDOPEPTIDASE CWLO"/>
    <property type="match status" value="1"/>
</dbReference>
<dbReference type="Pfam" id="PF00877">
    <property type="entry name" value="NLPC_P60"/>
    <property type="match status" value="1"/>
</dbReference>
<dbReference type="SUPFAM" id="SSF54001">
    <property type="entry name" value="Cysteine proteinases"/>
    <property type="match status" value="1"/>
</dbReference>
<dbReference type="PROSITE" id="PS51935">
    <property type="entry name" value="NLPC_P60"/>
    <property type="match status" value="1"/>
</dbReference>
<reference key="1">
    <citation type="journal article" date="1998" name="Nature">
        <title>Deciphering the biology of Mycobacterium tuberculosis from the complete genome sequence.</title>
        <authorList>
            <person name="Cole S.T."/>
            <person name="Brosch R."/>
            <person name="Parkhill J."/>
            <person name="Garnier T."/>
            <person name="Churcher C.M."/>
            <person name="Harris D.E."/>
            <person name="Gordon S.V."/>
            <person name="Eiglmeier K."/>
            <person name="Gas S."/>
            <person name="Barry C.E. III"/>
            <person name="Tekaia F."/>
            <person name="Badcock K."/>
            <person name="Basham D."/>
            <person name="Brown D."/>
            <person name="Chillingworth T."/>
            <person name="Connor R."/>
            <person name="Davies R.M."/>
            <person name="Devlin K."/>
            <person name="Feltwell T."/>
            <person name="Gentles S."/>
            <person name="Hamlin N."/>
            <person name="Holroyd S."/>
            <person name="Hornsby T."/>
            <person name="Jagels K."/>
            <person name="Krogh A."/>
            <person name="McLean J."/>
            <person name="Moule S."/>
            <person name="Murphy L.D."/>
            <person name="Oliver S."/>
            <person name="Osborne J."/>
            <person name="Quail M.A."/>
            <person name="Rajandream M.A."/>
            <person name="Rogers J."/>
            <person name="Rutter S."/>
            <person name="Seeger K."/>
            <person name="Skelton S."/>
            <person name="Squares S."/>
            <person name="Squares R."/>
            <person name="Sulston J.E."/>
            <person name="Taylor K."/>
            <person name="Whitehead S."/>
            <person name="Barrell B.G."/>
        </authorList>
    </citation>
    <scope>NUCLEOTIDE SEQUENCE [LARGE SCALE GENOMIC DNA]</scope>
    <source>
        <strain>ATCC 25618 / H37Rv</strain>
    </source>
</reference>
<reference key="2">
    <citation type="journal article" date="2006" name="Infect. Immun.">
        <title>A mycobacterial operon essential for virulence in vivo and invasion and intracellular persistence in macrophages.</title>
        <authorList>
            <person name="Gao L.Y."/>
            <person name="Pak M."/>
            <person name="Kish R."/>
            <person name="Kajihara K."/>
            <person name="Brown E.J."/>
        </authorList>
    </citation>
    <scope>FUNCTION IN HOST CELL INVASION AND SURVIVAL IN HOST MACROPHAGES</scope>
    <scope>MUTAGENESIS OF 419-ARG--ASP-421 AND 382-ASP--GLU-385</scope>
    <source>
        <strain>ATCC 25618 / H37Rv</strain>
    </source>
</reference>
<reference key="3">
    <citation type="journal article" date="2007" name="Mol. Microbiol.">
        <title>A partner for the resuscitation-promoting factors of Mycobacterium tuberculosis.</title>
        <authorList>
            <person name="Hett E.C."/>
            <person name="Chao M.C."/>
            <person name="Steyn A.J."/>
            <person name="Fortune S.M."/>
            <person name="Deng L.L."/>
            <person name="Rubin E.J."/>
        </authorList>
    </citation>
    <scope>FUNCTION</scope>
    <scope>INTERACTION WITH RPFB AND RPFE</scope>
    <scope>SUBCELLULAR LOCATION</scope>
    <source>
        <strain>ATCC 25618 / H37Rv</strain>
    </source>
</reference>
<reference key="4">
    <citation type="journal article" date="2008" name="BMC Syst. Biol.">
        <title>targetTB: a target identification pipeline for Mycobacterium tuberculosis through an interactome, reactome and genome-scale structural analysis.</title>
        <authorList>
            <person name="Raman K."/>
            <person name="Yeturu K."/>
            <person name="Chandra N."/>
        </authorList>
    </citation>
    <scope>IDENTIFICATION AS A DRUG TARGET [LARGE SCALE ANALYSIS]</scope>
</reference>
<reference key="5">
    <citation type="journal article" date="2008" name="PLoS Pathog.">
        <title>A mycobacterial enzyme essential for cell division synergizes with resuscitation-promoting factor.</title>
        <authorList>
            <person name="Hett E.C."/>
            <person name="Chao M.C."/>
            <person name="Deng L.L."/>
            <person name="Rubin E.J."/>
        </authorList>
    </citation>
    <scope>FUNCTION IN CELL DIVISION</scope>
    <scope>FUNCTION IN PEPTIDOGLYCAN DEGRADATION</scope>
    <source>
        <strain>ATCC 25618 / H37Rv</strain>
    </source>
</reference>
<reference key="6">
    <citation type="journal article" date="2010" name="PLoS Pathog.">
        <title>Interaction and modulation of two antagonistic cell wall enzymes of mycobacteria.</title>
        <authorList>
            <person name="Hett E.C."/>
            <person name="Chao M.C."/>
            <person name="Rubin E.J."/>
        </authorList>
    </citation>
    <scope>INTERACTION WITH PBP1A</scope>
    <scope>ACTIVITY REGULATION</scope>
    <source>
        <strain>ATCC 25618 / H37Rv</strain>
    </source>
</reference>
<reference key="7">
    <citation type="journal article" date="2011" name="Mol. Cell. Proteomics">
        <title>Proteogenomic analysis of Mycobacterium tuberculosis by high resolution mass spectrometry.</title>
        <authorList>
            <person name="Kelkar D.S."/>
            <person name="Kumar D."/>
            <person name="Kumar P."/>
            <person name="Balakrishnan L."/>
            <person name="Muthusamy B."/>
            <person name="Yadav A.K."/>
            <person name="Shrivastava P."/>
            <person name="Marimuthu A."/>
            <person name="Anand S."/>
            <person name="Sundaram H."/>
            <person name="Kingsbury R."/>
            <person name="Harsha H.C."/>
            <person name="Nair B."/>
            <person name="Prasad T.S."/>
            <person name="Chauhan D.S."/>
            <person name="Katoch K."/>
            <person name="Katoch V.M."/>
            <person name="Kumar P."/>
            <person name="Chaerkady R."/>
            <person name="Ramachandran S."/>
            <person name="Dash D."/>
            <person name="Pandey A."/>
        </authorList>
    </citation>
    <scope>IDENTIFICATION BY MASS SPECTROMETRY [LARGE SCALE ANALYSIS]</scope>
    <source>
        <strain>ATCC 25618 / H37Rv</strain>
    </source>
</reference>
<reference key="8">
    <citation type="journal article" date="2016" name="MBio">
        <title>Interaction of Mycobacterium tuberculosis virulence factor RipA with chaperone MoxR1 is required for transport through the TAT secretion system.</title>
        <authorList>
            <person name="Bhuwan M."/>
            <person name="Arora N."/>
            <person name="Sharma A."/>
            <person name="Khubaib M."/>
            <person name="Pandey S."/>
            <person name="Chaudhuri T.K."/>
            <person name="Hasnain S.E."/>
            <person name="Ehtesham N.Z."/>
        </authorList>
    </citation>
    <scope>ACTIVITY REGULATION</scope>
    <scope>INTERACTION WITH MOXR1 AND MCE2B</scope>
    <scope>SUBCELLULAR LOCATION</scope>
    <scope>EXPORT VIA THE TAT-SYSTEM</scope>
</reference>
<reference key="9">
    <citation type="journal article" date="2010" name="Structure">
        <title>Structure and functional regulation of RipA, a mycobacterial enzyme essential for daughter cell separation.</title>
        <authorList>
            <person name="Ruggiero A."/>
            <person name="Marasco D."/>
            <person name="Squeglia F."/>
            <person name="Soldini S."/>
            <person name="Pedone E."/>
            <person name="Pedone C."/>
            <person name="Berisio R."/>
        </authorList>
    </citation>
    <scope>X-RAY CRYSTALLOGRAPHY (1.0 ANGSTROMS) OF 263-472</scope>
    <scope>FUNCTION IN PEPTIDOGLYCAN DEGRADATION</scope>
    <scope>SUBUNIT</scope>
    <scope>CATALYTIC ACTIVITY</scope>
    <scope>MUTAGENESIS OF CYS-383</scope>
    <scope>ACTIVE SITE</scope>
    <scope>IDENTIFICATION BY MASS SPECTROMETRY</scope>
    <source>
        <strain>ATCC 25618 / H37Rv</strain>
    </source>
</reference>
<reference key="10">
    <citation type="submission" date="2010-07" db="PDB data bank">
        <title>Structure of Rv1477, hypothetical invasion protein of Mycobacterium tuberculosis.</title>
        <authorList>
            <person name="Tizzano B."/>
            <person name="Pogenberg V."/>
            <person name="Wilmanns M."/>
        </authorList>
    </citation>
    <scope>X-RAY CRYSTALLOGRAPHY (1.40 ANGSTROMS) OF 264-472</scope>
</reference>
<reference key="11">
    <citation type="journal article" date="2011" name="J. Mol. Biol.">
        <title>Peptidoglycan remodeling in Mycobacterium tuberculosis: comparison of structures and catalytic activities of RipA and RipB.</title>
        <authorList>
            <person name="Both D."/>
            <person name="Schneider G."/>
            <person name="Schnell R."/>
        </authorList>
    </citation>
    <scope>X-RAY CRYSTALLOGRAPHY (1.38 ANGSTROMS) OF 260-472</scope>
    <scope>FUNCTION</scope>
    <scope>CATALYTIC ACTIVITY</scope>
    <scope>PEPTIDOGLYCAN BINDING</scope>
    <scope>SUBUNIT</scope>
    <source>
        <strain>ATCC 25618 / H37Rv</strain>
    </source>
</reference>
<name>RIPA_MYCTU</name>
<evidence type="ECO:0000255" key="1">
    <source>
        <dbReference type="PROSITE-ProRule" id="PRU01284"/>
    </source>
</evidence>
<evidence type="ECO:0000269" key="2">
    <source>
    </source>
</evidence>
<evidence type="ECO:0000269" key="3">
    <source>
    </source>
</evidence>
<evidence type="ECO:0000269" key="4">
    <source>
    </source>
</evidence>
<evidence type="ECO:0000269" key="5">
    <source>
    </source>
</evidence>
<evidence type="ECO:0000269" key="6">
    <source>
    </source>
</evidence>
<evidence type="ECO:0000269" key="7">
    <source>
    </source>
</evidence>
<evidence type="ECO:0000269" key="8">
    <source>
    </source>
</evidence>
<evidence type="ECO:0000269" key="9">
    <source>
    </source>
</evidence>
<evidence type="ECO:0000305" key="10"/>
<evidence type="ECO:0000305" key="11">
    <source>
    </source>
</evidence>
<evidence type="ECO:0000305" key="12">
    <source>
    </source>
</evidence>
<evidence type="ECO:0000305" key="13">
    <source>
    </source>
</evidence>
<evidence type="ECO:0007829" key="14">
    <source>
        <dbReference type="PDB" id="4Q4G"/>
    </source>
</evidence>
<evidence type="ECO:0007829" key="15">
    <source>
        <dbReference type="PDB" id="6EWY"/>
    </source>
</evidence>
<gene>
    <name type="primary">ripA</name>
    <name type="ordered locus">Rv1477</name>
</gene>
<comment type="function">
    <text evidence="2 3 4 7 8">Peptidoglycan endopeptidase that cleaves the bond between D-glutamate and meso-diaminopimelate. Binds and degrades high-molecular weight peptidoglycan from a number of Actinobacteria; activity is increased in the presence of RpfB and inhibited by PBP1A (ponA1). Required for normal separation of daughter cells after cell division and for cell wall integrity. Required for host cell invasion and intracellular survival in host macrophages.</text>
</comment>
<comment type="activity regulation">
    <text evidence="6 9">MoxR1-mediated folding is critical for secretion via the TAT system (PubMed:26933057). The synergistic effects on peptidoglycan degradation of RipA plus RpfB are inhibited by addition of PBP1A (ponA1) (PubMed:20686708).</text>
</comment>
<comment type="biophysicochemical properties">
    <phDependence>
        <text>Optimum pH is between 5 and 5.5.</text>
    </phDependence>
</comment>
<comment type="subunit">
    <text evidence="3 6 7 8 9">Monomer. Interacts with RpfB and PBP1A (ponA1) via residues 448-472 of RipA, interacts with RpfE (PubMed:17919286, PubMed:20686708, PubMed:20826344, PubMed:21864539). Interacts with the chaperone MoxR1 (PubMed:26933057). RipA-MoxR1 interaction in the cytoplasm leads to proper folding of RipA, resulting in its secretion (PubMed:26933057). Also interacts with Mce2B (PubMed:26933057).</text>
</comment>
<comment type="subcellular location">
    <subcellularLocation>
        <location evidence="3 9">Secreted</location>
    </subcellularLocation>
    <text evidence="9">Secreted by the TAT secretion pathway (PubMed:26933057). Localizes to the septa upon expression in M.bovis or M.smegmatis. Remains associated with the cell.</text>
</comment>
<comment type="PTM">
    <text evidence="9">Exported by the Tat system (PubMed:26933057). The position of the signal peptide cleavage has not been experimentally proven (PubMed:26933057).</text>
</comment>
<comment type="miscellaneous">
    <text evidence="5">Was identified as a high-confidence drug target.</text>
</comment>
<comment type="similarity">
    <text evidence="1 10">Belongs to the peptidase C40 family.</text>
</comment>
<comment type="caution">
    <text evidence="11 12">The role of the N-terminal domain is controversial. A recent paper (PubMed:21864539) found it had no effect on enzyme activity, while another (PubMed:20826344) reported that it had an inhibitory role and had to be cleaved off for full enzyme activity.</text>
</comment>
<protein>
    <recommendedName>
        <fullName>Peptidoglycan endopeptidase RipA</fullName>
        <ecNumber>3.4.-.-</ecNumber>
    </recommendedName>
    <alternativeName>
        <fullName>Macrophage invasion and intracellular persistence protein A</fullName>
    </alternativeName>
    <alternativeName>
        <fullName>Resuscitation-promoting factor interaction partner A</fullName>
        <shortName>Rpf-interacting protein A</shortName>
    </alternativeName>
</protein>
<organism>
    <name type="scientific">Mycobacterium tuberculosis (strain ATCC 25618 / H37Rv)</name>
    <dbReference type="NCBI Taxonomy" id="83332"/>
    <lineage>
        <taxon>Bacteria</taxon>
        <taxon>Bacillati</taxon>
        <taxon>Actinomycetota</taxon>
        <taxon>Actinomycetes</taxon>
        <taxon>Mycobacteriales</taxon>
        <taxon>Mycobacteriaceae</taxon>
        <taxon>Mycobacterium</taxon>
        <taxon>Mycobacterium tuberculosis complex</taxon>
    </lineage>
</organism>
<keyword id="KW-0002">3D-structure</keyword>
<keyword id="KW-0961">Cell wall biogenesis/degradation</keyword>
<keyword id="KW-0378">Hydrolase</keyword>
<keyword id="KW-0645">Protease</keyword>
<keyword id="KW-1185">Reference proteome</keyword>
<keyword id="KW-0964">Secreted</keyword>
<keyword id="KW-0732">Signal</keyword>
<keyword id="KW-0788">Thiol protease</keyword>
<feature type="signal peptide" description="Tat-type signal" evidence="13">
    <location>
        <begin position="1"/>
        <end position="39"/>
    </location>
</feature>
<feature type="chain" id="PRO_0000413762" description="Peptidoglycan endopeptidase RipA">
    <location>
        <begin position="40"/>
        <end position="472"/>
    </location>
</feature>
<feature type="domain" description="NlpC/P60" evidence="1">
    <location>
        <begin position="340"/>
        <end position="472"/>
    </location>
</feature>
<feature type="active site" description="Nucleophile" evidence="1">
    <location>
        <position position="383"/>
    </location>
</feature>
<feature type="active site" description="Proton acceptor" evidence="1">
    <location>
        <position position="432"/>
    </location>
</feature>
<feature type="active site" evidence="1 11">
    <location>
        <position position="444"/>
    </location>
</feature>
<feature type="mutagenesis site" description="Abolishes host cell invasion and survival in host macrophages." evidence="2">
    <original>DCSG</original>
    <variation>AAAA</variation>
    <location>
        <begin position="382"/>
        <end position="385"/>
    </location>
</feature>
<feature type="mutagenesis site" description="Loss of enzyme activity." evidence="7">
    <original>C</original>
    <variation>A</variation>
    <location>
        <position position="383"/>
    </location>
</feature>
<feature type="mutagenesis site" description="Abolishes host cell invasion." evidence="2">
    <original>RGD</original>
    <variation>AGA</variation>
    <location>
        <begin position="419"/>
        <end position="421"/>
    </location>
</feature>
<feature type="helix" evidence="15">
    <location>
        <begin position="45"/>
        <end position="125"/>
    </location>
</feature>
<feature type="turn" evidence="15">
    <location>
        <begin position="128"/>
        <end position="131"/>
    </location>
</feature>
<feature type="helix" evidence="15">
    <location>
        <begin position="138"/>
        <end position="237"/>
    </location>
</feature>
<feature type="strand" evidence="14">
    <location>
        <begin position="284"/>
        <end position="288"/>
    </location>
</feature>
<feature type="turn" evidence="14">
    <location>
        <begin position="289"/>
        <end position="292"/>
    </location>
</feature>
<feature type="strand" evidence="14">
    <location>
        <begin position="293"/>
        <end position="296"/>
    </location>
</feature>
<feature type="helix" evidence="14">
    <location>
        <begin position="297"/>
        <end position="311"/>
    </location>
</feature>
<feature type="helix" evidence="14">
    <location>
        <begin position="336"/>
        <end position="338"/>
    </location>
</feature>
<feature type="helix" evidence="14">
    <location>
        <begin position="339"/>
        <end position="351"/>
    </location>
</feature>
<feature type="turn" evidence="14">
    <location>
        <begin position="352"/>
        <end position="355"/>
    </location>
</feature>
<feature type="helix" evidence="14">
    <location>
        <begin position="373"/>
        <end position="375"/>
    </location>
</feature>
<feature type="strand" evidence="14">
    <location>
        <begin position="379"/>
        <end position="381"/>
    </location>
</feature>
<feature type="helix" evidence="14">
    <location>
        <begin position="383"/>
        <end position="392"/>
    </location>
</feature>
<feature type="turn" evidence="14">
    <location>
        <begin position="393"/>
        <end position="395"/>
    </location>
</feature>
<feature type="helix" evidence="14">
    <location>
        <begin position="402"/>
        <end position="406"/>
    </location>
</feature>
<feature type="strand" evidence="14">
    <location>
        <begin position="408"/>
        <end position="413"/>
    </location>
</feature>
<feature type="helix" evidence="14">
    <location>
        <begin position="414"/>
        <end position="416"/>
    </location>
</feature>
<feature type="strand" evidence="14">
    <location>
        <begin position="422"/>
        <end position="426"/>
    </location>
</feature>
<feature type="helix" evidence="14">
    <location>
        <begin position="427"/>
        <end position="429"/>
    </location>
</feature>
<feature type="strand" evidence="14">
    <location>
        <begin position="431"/>
        <end position="438"/>
    </location>
</feature>
<feature type="strand" evidence="14">
    <location>
        <begin position="441"/>
        <end position="444"/>
    </location>
</feature>
<feature type="strand" evidence="14">
    <location>
        <begin position="451"/>
        <end position="456"/>
    </location>
</feature>
<feature type="strand" evidence="14">
    <location>
        <begin position="464"/>
        <end position="470"/>
    </location>
</feature>